<name>CLAT_DROME</name>
<reference key="1">
    <citation type="journal article" date="1986" name="Proc. Natl. Acad. Sci. U.S.A.">
        <title>Cloning of Drosophila choline acetyltransferase cDNA.</title>
        <authorList>
            <person name="Itoh N."/>
            <person name="Slemmon J.R."/>
            <person name="Hawke D.H."/>
            <person name="Williamson R."/>
            <person name="Morita E."/>
            <person name="Itakura K."/>
            <person name="Roberts E."/>
            <person name="Shively J.E."/>
            <person name="Crawford G.D."/>
            <person name="Salvaterra P.M."/>
        </authorList>
    </citation>
    <scope>NUCLEOTIDE SEQUENCE [MRNA] (ISOFORM A)</scope>
    <source>
        <tissue>Head</tissue>
    </source>
</reference>
<reference key="2">
    <citation type="journal article" date="1990" name="J. Biol. Chem.">
        <title>Drosophila choline acetyltransferase uses a non-AUG initiation codon and full length RNA is inefficiently translated.</title>
        <authorList>
            <person name="Sugihara H."/>
            <person name="Andrisani V."/>
            <person name="Salvaterra P.M."/>
        </authorList>
    </citation>
    <scope>NUCLEOTIDE SEQUENCE [MRNA] (ISOFORM A)</scope>
    <scope>SEQUENCE REVISION</scope>
    <scope>INITIATION CODON GTG</scope>
</reference>
<reference key="3">
    <citation type="submission" date="1999-05" db="EMBL/GenBank/DDBJ databases">
        <authorList>
            <person name="Salvaterra P.M."/>
        </authorList>
    </citation>
    <scope>SEQUENCE REVISION</scope>
</reference>
<reference key="4">
    <citation type="journal article" date="1991" name="J. Neurochem.">
        <title>Genomic organization of Drosophila choline acetyltransferase.</title>
        <authorList>
            <person name="Sugihara H."/>
            <person name="Andrisani V."/>
            <person name="Salvaterra P.M."/>
        </authorList>
    </citation>
    <scope>NUCLEOTIDE SEQUENCE [GENOMIC DNA] (ISOFORM C)</scope>
</reference>
<reference key="5">
    <citation type="journal article" date="2000" name="Science">
        <title>The genome sequence of Drosophila melanogaster.</title>
        <authorList>
            <person name="Adams M.D."/>
            <person name="Celniker S.E."/>
            <person name="Holt R.A."/>
            <person name="Evans C.A."/>
            <person name="Gocayne J.D."/>
            <person name="Amanatides P.G."/>
            <person name="Scherer S.E."/>
            <person name="Li P.W."/>
            <person name="Hoskins R.A."/>
            <person name="Galle R.F."/>
            <person name="George R.A."/>
            <person name="Lewis S.E."/>
            <person name="Richards S."/>
            <person name="Ashburner M."/>
            <person name="Henderson S.N."/>
            <person name="Sutton G.G."/>
            <person name="Wortman J.R."/>
            <person name="Yandell M.D."/>
            <person name="Zhang Q."/>
            <person name="Chen L.X."/>
            <person name="Brandon R.C."/>
            <person name="Rogers Y.-H.C."/>
            <person name="Blazej R.G."/>
            <person name="Champe M."/>
            <person name="Pfeiffer B.D."/>
            <person name="Wan K.H."/>
            <person name="Doyle C."/>
            <person name="Baxter E.G."/>
            <person name="Helt G."/>
            <person name="Nelson C.R."/>
            <person name="Miklos G.L.G."/>
            <person name="Abril J.F."/>
            <person name="Agbayani A."/>
            <person name="An H.-J."/>
            <person name="Andrews-Pfannkoch C."/>
            <person name="Baldwin D."/>
            <person name="Ballew R.M."/>
            <person name="Basu A."/>
            <person name="Baxendale J."/>
            <person name="Bayraktaroglu L."/>
            <person name="Beasley E.M."/>
            <person name="Beeson K.Y."/>
            <person name="Benos P.V."/>
            <person name="Berman B.P."/>
            <person name="Bhandari D."/>
            <person name="Bolshakov S."/>
            <person name="Borkova D."/>
            <person name="Botchan M.R."/>
            <person name="Bouck J."/>
            <person name="Brokstein P."/>
            <person name="Brottier P."/>
            <person name="Burtis K.C."/>
            <person name="Busam D.A."/>
            <person name="Butler H."/>
            <person name="Cadieu E."/>
            <person name="Center A."/>
            <person name="Chandra I."/>
            <person name="Cherry J.M."/>
            <person name="Cawley S."/>
            <person name="Dahlke C."/>
            <person name="Davenport L.B."/>
            <person name="Davies P."/>
            <person name="de Pablos B."/>
            <person name="Delcher A."/>
            <person name="Deng Z."/>
            <person name="Mays A.D."/>
            <person name="Dew I."/>
            <person name="Dietz S.M."/>
            <person name="Dodson K."/>
            <person name="Doup L.E."/>
            <person name="Downes M."/>
            <person name="Dugan-Rocha S."/>
            <person name="Dunkov B.C."/>
            <person name="Dunn P."/>
            <person name="Durbin K.J."/>
            <person name="Evangelista C.C."/>
            <person name="Ferraz C."/>
            <person name="Ferriera S."/>
            <person name="Fleischmann W."/>
            <person name="Fosler C."/>
            <person name="Gabrielian A.E."/>
            <person name="Garg N.S."/>
            <person name="Gelbart W.M."/>
            <person name="Glasser K."/>
            <person name="Glodek A."/>
            <person name="Gong F."/>
            <person name="Gorrell J.H."/>
            <person name="Gu Z."/>
            <person name="Guan P."/>
            <person name="Harris M."/>
            <person name="Harris N.L."/>
            <person name="Harvey D.A."/>
            <person name="Heiman T.J."/>
            <person name="Hernandez J.R."/>
            <person name="Houck J."/>
            <person name="Hostin D."/>
            <person name="Houston K.A."/>
            <person name="Howland T.J."/>
            <person name="Wei M.-H."/>
            <person name="Ibegwam C."/>
            <person name="Jalali M."/>
            <person name="Kalush F."/>
            <person name="Karpen G.H."/>
            <person name="Ke Z."/>
            <person name="Kennison J.A."/>
            <person name="Ketchum K.A."/>
            <person name="Kimmel B.E."/>
            <person name="Kodira C.D."/>
            <person name="Kraft C.L."/>
            <person name="Kravitz S."/>
            <person name="Kulp D."/>
            <person name="Lai Z."/>
            <person name="Lasko P."/>
            <person name="Lei Y."/>
            <person name="Levitsky A.A."/>
            <person name="Li J.H."/>
            <person name="Li Z."/>
            <person name="Liang Y."/>
            <person name="Lin X."/>
            <person name="Liu X."/>
            <person name="Mattei B."/>
            <person name="McIntosh T.C."/>
            <person name="McLeod M.P."/>
            <person name="McPherson D."/>
            <person name="Merkulov G."/>
            <person name="Milshina N.V."/>
            <person name="Mobarry C."/>
            <person name="Morris J."/>
            <person name="Moshrefi A."/>
            <person name="Mount S.M."/>
            <person name="Moy M."/>
            <person name="Murphy B."/>
            <person name="Murphy L."/>
            <person name="Muzny D.M."/>
            <person name="Nelson D.L."/>
            <person name="Nelson D.R."/>
            <person name="Nelson K.A."/>
            <person name="Nixon K."/>
            <person name="Nusskern D.R."/>
            <person name="Pacleb J.M."/>
            <person name="Palazzolo M."/>
            <person name="Pittman G.S."/>
            <person name="Pan S."/>
            <person name="Pollard J."/>
            <person name="Puri V."/>
            <person name="Reese M.G."/>
            <person name="Reinert K."/>
            <person name="Remington K."/>
            <person name="Saunders R.D.C."/>
            <person name="Scheeler F."/>
            <person name="Shen H."/>
            <person name="Shue B.C."/>
            <person name="Siden-Kiamos I."/>
            <person name="Simpson M."/>
            <person name="Skupski M.P."/>
            <person name="Smith T.J."/>
            <person name="Spier E."/>
            <person name="Spradling A.C."/>
            <person name="Stapleton M."/>
            <person name="Strong R."/>
            <person name="Sun E."/>
            <person name="Svirskas R."/>
            <person name="Tector C."/>
            <person name="Turner R."/>
            <person name="Venter E."/>
            <person name="Wang A.H."/>
            <person name="Wang X."/>
            <person name="Wang Z.-Y."/>
            <person name="Wassarman D.A."/>
            <person name="Weinstock G.M."/>
            <person name="Weissenbach J."/>
            <person name="Williams S.M."/>
            <person name="Woodage T."/>
            <person name="Worley K.C."/>
            <person name="Wu D."/>
            <person name="Yang S."/>
            <person name="Yao Q.A."/>
            <person name="Ye J."/>
            <person name="Yeh R.-F."/>
            <person name="Zaveri J.S."/>
            <person name="Zhan M."/>
            <person name="Zhang G."/>
            <person name="Zhao Q."/>
            <person name="Zheng L."/>
            <person name="Zheng X.H."/>
            <person name="Zhong F.N."/>
            <person name="Zhong W."/>
            <person name="Zhou X."/>
            <person name="Zhu S.C."/>
            <person name="Zhu X."/>
            <person name="Smith H.O."/>
            <person name="Gibbs R.A."/>
            <person name="Myers E.W."/>
            <person name="Rubin G.M."/>
            <person name="Venter J.C."/>
        </authorList>
    </citation>
    <scope>NUCLEOTIDE SEQUENCE [LARGE SCALE GENOMIC DNA]</scope>
    <source>
        <strain>Berkeley</strain>
    </source>
</reference>
<reference key="6">
    <citation type="journal article" date="2002" name="Genome Biol.">
        <title>Annotation of the Drosophila melanogaster euchromatic genome: a systematic review.</title>
        <authorList>
            <person name="Misra S."/>
            <person name="Crosby M.A."/>
            <person name="Mungall C.J."/>
            <person name="Matthews B.B."/>
            <person name="Campbell K.S."/>
            <person name="Hradecky P."/>
            <person name="Huang Y."/>
            <person name="Kaminker J.S."/>
            <person name="Millburn G.H."/>
            <person name="Prochnik S.E."/>
            <person name="Smith C.D."/>
            <person name="Tupy J.L."/>
            <person name="Whitfield E.J."/>
            <person name="Bayraktaroglu L."/>
            <person name="Berman B.P."/>
            <person name="Bettencourt B.R."/>
            <person name="Celniker S.E."/>
            <person name="de Grey A.D.N.J."/>
            <person name="Drysdale R.A."/>
            <person name="Harris N.L."/>
            <person name="Richter J."/>
            <person name="Russo S."/>
            <person name="Schroeder A.J."/>
            <person name="Shu S.Q."/>
            <person name="Stapleton M."/>
            <person name="Yamada C."/>
            <person name="Ashburner M."/>
            <person name="Gelbart W.M."/>
            <person name="Rubin G.M."/>
            <person name="Lewis S.E."/>
        </authorList>
    </citation>
    <scope>GENOME REANNOTATION</scope>
    <scope>ALTERNATIVE SPLICING</scope>
    <source>
        <strain>Berkeley</strain>
    </source>
</reference>
<reference key="7">
    <citation type="journal article" date="2002" name="Genome Biol.">
        <title>A Drosophila full-length cDNA resource.</title>
        <authorList>
            <person name="Stapleton M."/>
            <person name="Carlson J.W."/>
            <person name="Brokstein P."/>
            <person name="Yu C."/>
            <person name="Champe M."/>
            <person name="George R.A."/>
            <person name="Guarin H."/>
            <person name="Kronmiller B."/>
            <person name="Pacleb J.M."/>
            <person name="Park S."/>
            <person name="Wan K.H."/>
            <person name="Rubin G.M."/>
            <person name="Celniker S.E."/>
        </authorList>
    </citation>
    <scope>NUCLEOTIDE SEQUENCE [LARGE SCALE MRNA] (ISOFORM B)</scope>
    <source>
        <strain>Berkeley</strain>
        <tissue>Head</tissue>
    </source>
</reference>
<reference key="8">
    <citation type="journal article" date="1989" name="J. Neurochem.">
        <title>Sequence analysis of a proteolyzed site in Drosophila choline acetyltransferase.</title>
        <authorList>
            <person name="Slemmon J.R."/>
        </authorList>
    </citation>
    <scope>PROTEIN SEQUENCE OF 585-594</scope>
    <scope>CLEAVAGE</scope>
</reference>
<reference key="9">
    <citation type="journal article" date="1991" name="Brain Res. Mol. Brain Res.">
        <title>The amino terminus of the putative Drosophila choline acetyltransferase precursor is cleaved to yield the 67 kDa enzyme.</title>
        <authorList>
            <person name="Slemmon J.R."/>
            <person name="Campbell G.A."/>
            <person name="Selski D.J."/>
            <person name="Bramson H.N."/>
        </authorList>
    </citation>
    <scope>FUNCTION</scope>
    <scope>CLEAVAGE</scope>
    <scope>CATALYTIC ACTIVITY</scope>
</reference>
<reference key="10">
    <citation type="journal article" date="1984" name="Neurochem. Int.">
        <title>Molecular characterization of choline acetyltransferase from Drosophila melanogaster.</title>
        <authorList>
            <person name="Slemmon J.R."/>
            <person name="Salvaterra P.M."/>
            <person name="Roberts E."/>
        </authorList>
    </citation>
    <scope>INTERACTION BETWEEN 54 KDA AND 13 KDA CHAINS</scope>
</reference>
<reference key="11">
    <citation type="journal article" date="1993" name="J. Neurochem.">
        <title>Functional analysis of conserved histidines in choline acetyltransferase by site-directed mutagenesis.</title>
        <authorList>
            <person name="Carbini L.A."/>
            <person name="Hersh L.B."/>
        </authorList>
    </citation>
    <scope>MUTAGENESIS OF HIS-261; HIS-386 AND HIS-419</scope>
    <scope>ACTIVE SITE</scope>
</reference>
<keyword id="KW-0012">Acyltransferase</keyword>
<keyword id="KW-0025">Alternative splicing</keyword>
<keyword id="KW-0903">Direct protein sequencing</keyword>
<keyword id="KW-0530">Neurotransmitter biosynthesis</keyword>
<keyword id="KW-1185">Reference proteome</keyword>
<keyword id="KW-0808">Transferase</keyword>
<sequence length="721" mass="81328">MASNEASTSAAGSGPESAALFSKLRSFSIGSGPNSPQRVVSNLRGFLTHRLSNITPSDTGWKDSILSIPKKWLSTAESVDEFGFPDTLPKVPVPALDETMADYIRALEPITTPAQLERTKELIRQFSAPQGIGARLHQYLLDKREAEDNWAYYYWLNEMYMDIRIPLPINSNPGMVFPPRRFKTVHDVAHFAARLLDGILSHREMLDSGELPLERAASREKNQPLCMAQYYRLLGSCRRPGVKQDSQFLPSRERLNDEDRHVVVICRNQMYCVVLQASDRGKLSESEIASQILYVLSDAPCLPAKPVPVGLLTAEPRSTWARDREMLQEDERNQRNLELIETAQVVLCLDEPLAGNFNARGFTGATPTVHRAGDRDETNMAHEMIHGGGSEYNSGNRWFDKTMQLIICTDGTWGLCYEHSCSEGIAVVQLLEKIYKKIEEHPDEDNGLPQHHLPPPERLEWHVGPQLQLRFAQASKSVDKCIDDLDFYVYRYQSYGKTFIKSCQVSPDVYIQLALQLAHYKLYGRLVATYESASTRRFLHGRVDCIRAASTEALEWAKAMCQGEGANVPLESDREDEEESRKVKFSIYSKDHLRELFRCAVARQTEVMVKNILGNGIDIPLLGLREASIEVTGEMHELFKDESYIISQCFLLSTSQVACSTDSFMGYGPVTPRGYGCSYNPHPEQIVFCVSAFYSCEDTSASRYAKSLQDSLDIMRDLLQN</sequence>
<accession>P07668</accession>
<accession>Q8MQR2</accession>
<accession>Q9TXC6</accession>
<accession>Q9VE41</accession>
<evidence type="ECO:0000250" key="1"/>
<evidence type="ECO:0000269" key="2">
    <source>
    </source>
</evidence>
<evidence type="ECO:0000269" key="3">
    <source>
    </source>
</evidence>
<evidence type="ECO:0000303" key="4">
    <source>
    </source>
</evidence>
<evidence type="ECO:0000303" key="5">
    <source>
    </source>
</evidence>
<evidence type="ECO:0000303" key="6">
    <source>
    </source>
</evidence>
<evidence type="ECO:0000303" key="7">
    <source>
    </source>
</evidence>
<evidence type="ECO:0000305" key="8"/>
<evidence type="ECO:0000305" key="9">
    <source>
    </source>
</evidence>
<evidence type="ECO:0000312" key="10">
    <source>
        <dbReference type="FlyBase" id="FBgn0000303"/>
    </source>
</evidence>
<organism>
    <name type="scientific">Drosophila melanogaster</name>
    <name type="common">Fruit fly</name>
    <dbReference type="NCBI Taxonomy" id="7227"/>
    <lineage>
        <taxon>Eukaryota</taxon>
        <taxon>Metazoa</taxon>
        <taxon>Ecdysozoa</taxon>
        <taxon>Arthropoda</taxon>
        <taxon>Hexapoda</taxon>
        <taxon>Insecta</taxon>
        <taxon>Pterygota</taxon>
        <taxon>Neoptera</taxon>
        <taxon>Endopterygota</taxon>
        <taxon>Diptera</taxon>
        <taxon>Brachycera</taxon>
        <taxon>Muscomorpha</taxon>
        <taxon>Ephydroidea</taxon>
        <taxon>Drosophilidae</taxon>
        <taxon>Drosophila</taxon>
        <taxon>Sophophora</taxon>
    </lineage>
</organism>
<feature type="chain" id="PRO_0000004420" description="Choline O-acetyltransferase">
    <location>
        <begin position="1"/>
        <end position="721"/>
    </location>
</feature>
<feature type="chain" id="PRO_0000004421" description="Choline O-acetyltransferase 54 kDa chain">
    <location>
        <begin status="unknown"/>
        <end position="584"/>
    </location>
</feature>
<feature type="chain" id="PRO_0000004422" description="Choline O-acetyltransferase 13 kDa chain">
    <location>
        <begin position="585"/>
        <end position="721"/>
    </location>
</feature>
<feature type="chain" id="PRO_0000004423" description="Choline O-acetyltransferase 67 kDa chain">
    <location>
        <begin status="unknown"/>
        <end position="721"/>
    </location>
</feature>
<feature type="active site" description="Proton acceptor" evidence="3">
    <location>
        <position position="419"/>
    </location>
</feature>
<feature type="binding site" evidence="1">
    <location>
        <begin position="496"/>
        <end position="508"/>
    </location>
    <ligand>
        <name>CoA</name>
        <dbReference type="ChEBI" id="CHEBI:57287"/>
    </ligand>
</feature>
<feature type="binding site" evidence="1">
    <location>
        <position position="534"/>
    </location>
    <ligand>
        <name>CoA</name>
        <dbReference type="ChEBI" id="CHEBI:57287"/>
    </ligand>
</feature>
<feature type="binding site" evidence="1">
    <location>
        <position position="656"/>
    </location>
    <ligand>
        <name>CoA</name>
        <dbReference type="ChEBI" id="CHEBI:57287"/>
    </ligand>
</feature>
<feature type="site" description="Cleavage">
    <location>
        <begin position="584"/>
        <end position="585"/>
    </location>
</feature>
<feature type="splice variant" id="VSP_011397" description="In isoform C." evidence="8">
    <original>GWKDSILSIPKKWLSTAESVDEFGFP</original>
    <variation>MERLDSVDTKEMALNGRVCGRVWIP</variation>
    <location>
        <begin position="60"/>
        <end position="85"/>
    </location>
</feature>
<feature type="splice variant" id="VSP_008316" description="In isoform B." evidence="4">
    <location>
        <begin position="583"/>
        <end position="589"/>
    </location>
</feature>
<feature type="mutagenesis site" description="No effect." evidence="3">
    <original>H</original>
    <variation>L</variation>
    <variation>Q</variation>
    <location>
        <position position="261"/>
    </location>
</feature>
<feature type="mutagenesis site" description="Loss of activity." evidence="3">
    <original>H</original>
    <variation>L</variation>
    <location>
        <position position="386"/>
    </location>
</feature>
<feature type="mutagenesis site" description="No effect." evidence="3">
    <original>H</original>
    <variation>Q</variation>
    <location>
        <position position="386"/>
    </location>
</feature>
<feature type="mutagenesis site" description="Loss of activity." evidence="3">
    <original>H</original>
    <variation>L</variation>
    <variation>Q</variation>
    <location>
        <position position="419"/>
    </location>
</feature>
<dbReference type="EC" id="2.3.1.6" evidence="2"/>
<dbReference type="EMBL" id="M63724">
    <property type="protein sequence ID" value="AAA28406.2"/>
    <property type="molecule type" value="mRNA"/>
</dbReference>
<dbReference type="EMBL" id="AE014297">
    <property type="protein sequence ID" value="AAF55588.5"/>
    <property type="molecule type" value="Genomic_DNA"/>
</dbReference>
<dbReference type="EMBL" id="AE014297">
    <property type="protein sequence ID" value="AAS65177.2"/>
    <property type="molecule type" value="Genomic_DNA"/>
</dbReference>
<dbReference type="EMBL" id="AY128433">
    <property type="protein sequence ID" value="AAM75026.1"/>
    <property type="status" value="ALT_FRAME"/>
    <property type="molecule type" value="mRNA"/>
</dbReference>
<dbReference type="PIR" id="A24889">
    <property type="entry name" value="A24889"/>
</dbReference>
<dbReference type="PIR" id="A36526">
    <property type="entry name" value="A36526"/>
</dbReference>
<dbReference type="RefSeq" id="NP_477004.5">
    <molecule id="P07668-1"/>
    <property type="nucleotide sequence ID" value="NM_057656.3"/>
</dbReference>
<dbReference type="RefSeq" id="NP_996239.2">
    <molecule id="P07668-2"/>
    <property type="nucleotide sequence ID" value="NM_206517.2"/>
</dbReference>
<dbReference type="SMR" id="P07668"/>
<dbReference type="BioGRID" id="67255">
    <property type="interactions" value="5"/>
</dbReference>
<dbReference type="DIP" id="DIP-20557N"/>
<dbReference type="FunCoup" id="P07668">
    <property type="interactions" value="97"/>
</dbReference>
<dbReference type="IntAct" id="P07668">
    <property type="interactions" value="3"/>
</dbReference>
<dbReference type="STRING" id="7227.FBpp0088397"/>
<dbReference type="GlyGen" id="P07668">
    <property type="glycosylation" value="1 site"/>
</dbReference>
<dbReference type="PaxDb" id="7227-FBpp0088397"/>
<dbReference type="EnsemblMetazoa" id="FBtr0089367">
    <molecule id="P07668-1"/>
    <property type="protein sequence ID" value="FBpp0088397"/>
    <property type="gene ID" value="FBgn0000303"/>
</dbReference>
<dbReference type="EnsemblMetazoa" id="FBtr0089368">
    <molecule id="P07668-2"/>
    <property type="protein sequence ID" value="FBpp0088977"/>
    <property type="gene ID" value="FBgn0000303"/>
</dbReference>
<dbReference type="GeneID" id="42249"/>
<dbReference type="KEGG" id="dme:Dmel_CG12345"/>
<dbReference type="AGR" id="FB:FBgn0000303"/>
<dbReference type="CTD" id="1103"/>
<dbReference type="FlyBase" id="FBgn0000303">
    <property type="gene designation" value="ChAT"/>
</dbReference>
<dbReference type="VEuPathDB" id="VectorBase:FBgn0000303"/>
<dbReference type="eggNOG" id="KOG3717">
    <property type="taxonomic scope" value="Eukaryota"/>
</dbReference>
<dbReference type="GeneTree" id="ENSGT01130000278297"/>
<dbReference type="InParanoid" id="P07668"/>
<dbReference type="OMA" id="FIKQQKC"/>
<dbReference type="OrthoDB" id="240216at2759"/>
<dbReference type="PhylomeDB" id="P07668"/>
<dbReference type="BRENDA" id="2.3.1.6">
    <property type="organism ID" value="1994"/>
</dbReference>
<dbReference type="Reactome" id="R-DME-1483191">
    <property type="pathway name" value="Synthesis of PC"/>
</dbReference>
<dbReference type="Reactome" id="R-DME-264642">
    <property type="pathway name" value="Acetylcholine Neurotransmitter Release Cycle"/>
</dbReference>
<dbReference type="BioGRID-ORCS" id="42249">
    <property type="hits" value="0 hits in 3 CRISPR screens"/>
</dbReference>
<dbReference type="GenomeRNAi" id="42249"/>
<dbReference type="PRO" id="PR:P07668"/>
<dbReference type="Proteomes" id="UP000000803">
    <property type="component" value="Chromosome 3R"/>
</dbReference>
<dbReference type="Bgee" id="FBgn0000303">
    <property type="expression patterns" value="Expressed in adult olfactory projection neuron in brain and 145 other cell types or tissues"/>
</dbReference>
<dbReference type="GO" id="GO:0005737">
    <property type="term" value="C:cytoplasm"/>
    <property type="evidence" value="ECO:0000318"/>
    <property type="project" value="GO_Central"/>
</dbReference>
<dbReference type="GO" id="GO:0005829">
    <property type="term" value="C:cytosol"/>
    <property type="evidence" value="ECO:0000303"/>
    <property type="project" value="UniProtKB"/>
</dbReference>
<dbReference type="GO" id="GO:0043005">
    <property type="term" value="C:neuron projection"/>
    <property type="evidence" value="ECO:0000318"/>
    <property type="project" value="GO_Central"/>
</dbReference>
<dbReference type="GO" id="GO:0005634">
    <property type="term" value="C:nucleus"/>
    <property type="evidence" value="ECO:0000303"/>
    <property type="project" value="UniProtKB"/>
</dbReference>
<dbReference type="GO" id="GO:0043195">
    <property type="term" value="C:terminal bouton"/>
    <property type="evidence" value="ECO:0000314"/>
    <property type="project" value="FlyBase"/>
</dbReference>
<dbReference type="GO" id="GO:0004102">
    <property type="term" value="F:choline O-acetyltransferase activity"/>
    <property type="evidence" value="ECO:0000314"/>
    <property type="project" value="UniProtKB"/>
</dbReference>
<dbReference type="GO" id="GO:0008292">
    <property type="term" value="P:acetylcholine biosynthetic process"/>
    <property type="evidence" value="ECO:0000315"/>
    <property type="project" value="FlyBase"/>
</dbReference>
<dbReference type="GO" id="GO:0007274">
    <property type="term" value="P:neuromuscular synaptic transmission"/>
    <property type="evidence" value="ECO:0000315"/>
    <property type="project" value="FlyBase"/>
</dbReference>
<dbReference type="FunFam" id="3.30.559.10:FF:000001">
    <property type="entry name" value="Carnitine O-acetyltransferase"/>
    <property type="match status" value="1"/>
</dbReference>
<dbReference type="FunFam" id="3.30.559.70:FF:000011">
    <property type="entry name" value="Choline O-acetyltransferase"/>
    <property type="match status" value="1"/>
</dbReference>
<dbReference type="Gene3D" id="3.30.559.10">
    <property type="entry name" value="Chloramphenicol acetyltransferase-like domain"/>
    <property type="match status" value="1"/>
</dbReference>
<dbReference type="Gene3D" id="3.30.559.70">
    <property type="entry name" value="Choline/Carnitine o-acyltransferase, domain 2"/>
    <property type="match status" value="1"/>
</dbReference>
<dbReference type="InterPro" id="IPR000542">
    <property type="entry name" value="Carn_acyl_trans"/>
</dbReference>
<dbReference type="InterPro" id="IPR023213">
    <property type="entry name" value="CAT-like_dom_sf"/>
</dbReference>
<dbReference type="InterPro" id="IPR039551">
    <property type="entry name" value="Cho/carn_acyl_trans"/>
</dbReference>
<dbReference type="InterPro" id="IPR042231">
    <property type="entry name" value="Cho/carn_acyl_trans_2"/>
</dbReference>
<dbReference type="PANTHER" id="PTHR22589">
    <property type="entry name" value="CARNITINE O-ACYLTRANSFERASE"/>
    <property type="match status" value="1"/>
</dbReference>
<dbReference type="PANTHER" id="PTHR22589:SF14">
    <property type="entry name" value="CHOLINE O-ACETYLTRANSFERASE"/>
    <property type="match status" value="1"/>
</dbReference>
<dbReference type="Pfam" id="PF00755">
    <property type="entry name" value="Carn_acyltransf"/>
    <property type="match status" value="1"/>
</dbReference>
<dbReference type="SUPFAM" id="SSF52777">
    <property type="entry name" value="CoA-dependent acyltransferases"/>
    <property type="match status" value="2"/>
</dbReference>
<dbReference type="PROSITE" id="PS00439">
    <property type="entry name" value="ACYLTRANSF_C_1"/>
    <property type="match status" value="1"/>
</dbReference>
<dbReference type="PROSITE" id="PS00440">
    <property type="entry name" value="ACYLTRANSF_C_2"/>
    <property type="match status" value="1"/>
</dbReference>
<gene>
    <name evidence="5 10" type="primary">ChAT</name>
    <name evidence="7" type="synonym">Cha</name>
    <name evidence="10" type="ORF">CG12345</name>
</gene>
<proteinExistence type="evidence at protein level"/>
<comment type="function">
    <text evidence="2">Catalyzes the reversible synthesis of acetylcholine (ACh) from acetyl CoA and choline at cholinergic synapses.</text>
</comment>
<comment type="catalytic activity">
    <reaction evidence="2">
        <text>choline + acetyl-CoA = acetylcholine + CoA</text>
        <dbReference type="Rhea" id="RHEA:18821"/>
        <dbReference type="ChEBI" id="CHEBI:15354"/>
        <dbReference type="ChEBI" id="CHEBI:15355"/>
        <dbReference type="ChEBI" id="CHEBI:57287"/>
        <dbReference type="ChEBI" id="CHEBI:57288"/>
        <dbReference type="EC" id="2.3.1.6"/>
    </reaction>
    <physiologicalReaction direction="left-to-right" evidence="9">
        <dbReference type="Rhea" id="RHEA:18822"/>
    </physiologicalReaction>
</comment>
<comment type="subunit">
    <text>The 54 kDa and 13 kDa chains exist as a heterodimer.</text>
</comment>
<comment type="alternative products">
    <event type="alternative splicing"/>
    <isoform>
        <id>P07668-1</id>
        <name>A</name>
        <sequence type="displayed"/>
    </isoform>
    <isoform>
        <id>P07668-2</id>
        <name>B</name>
        <sequence type="described" ref="VSP_008316"/>
    </isoform>
    <isoform>
        <id>P07668-3</id>
        <name>C</name>
        <sequence type="described" ref="VSP_011397"/>
    </isoform>
</comment>
<comment type="PTM">
    <text>The N-terminus of choline O-acetyltransferase 67 kDa and 54 kDa chains are blocked.</text>
</comment>
<comment type="similarity">
    <text evidence="8">Belongs to the carnitine/choline acetyltransferase family.</text>
</comment>
<comment type="sequence caution" evidence="8">
    <conflict type="frameshift">
        <sequence resource="EMBL-CDS" id="AAM75026"/>
    </conflict>
</comment>
<protein>
    <recommendedName>
        <fullName evidence="7">Choline O-acetyltransferase</fullName>
        <shortName evidence="8">CHOACTase</shortName>
        <shortName evidence="7">Choline acetylase</shortName>
        <ecNumber evidence="2">2.3.1.6</ecNumber>
    </recommendedName>
    <component>
        <recommendedName>
            <fullName evidence="6">Choline O-acetyltransferase 67 kDa chain</fullName>
        </recommendedName>
    </component>
    <component>
        <recommendedName>
            <fullName evidence="6">Choline O-acetyltransferase 54 kDa chain</fullName>
        </recommendedName>
    </component>
    <component>
        <recommendedName>
            <fullName evidence="6">Choline O-acetyltransferase 13 kDa chain</fullName>
        </recommendedName>
    </component>
</protein>